<proteinExistence type="evidence at transcript level"/>
<gene>
    <name type="primary">PDH2</name>
</gene>
<feature type="signal peptide" evidence="2">
    <location>
        <begin position="1"/>
        <end position="23"/>
    </location>
</feature>
<feature type="peptide" id="PRO_0000043333" description="PDH precursor-related peptide">
    <location>
        <begin position="24"/>
        <end position="57"/>
    </location>
</feature>
<feature type="peptide" id="PRO_0000043334" description="Pigment-dispersing hormone">
    <location>
        <begin position="60"/>
        <end position="77"/>
    </location>
</feature>
<feature type="modified residue" description="Alanine amide" evidence="1">
    <location>
        <position position="77"/>
    </location>
</feature>
<dbReference type="EMBL" id="Y11722">
    <property type="protein sequence ID" value="CAA72408.1"/>
    <property type="molecule type" value="mRNA"/>
</dbReference>
<dbReference type="PIR" id="JC4757">
    <property type="entry name" value="JC4757"/>
</dbReference>
<dbReference type="OrthoDB" id="6378554at2759"/>
<dbReference type="GO" id="GO:0005576">
    <property type="term" value="C:extracellular region"/>
    <property type="evidence" value="ECO:0007669"/>
    <property type="project" value="UniProtKB-SubCell"/>
</dbReference>
<dbReference type="GO" id="GO:0045202">
    <property type="term" value="C:synapse"/>
    <property type="evidence" value="ECO:0007669"/>
    <property type="project" value="GOC"/>
</dbReference>
<dbReference type="GO" id="GO:0005179">
    <property type="term" value="F:hormone activity"/>
    <property type="evidence" value="ECO:0007669"/>
    <property type="project" value="UniProtKB-KW"/>
</dbReference>
<dbReference type="GO" id="GO:0007268">
    <property type="term" value="P:chemical synaptic transmission"/>
    <property type="evidence" value="ECO:0007669"/>
    <property type="project" value="UniProtKB-KW"/>
</dbReference>
<dbReference type="GO" id="GO:0009416">
    <property type="term" value="P:response to light stimulus"/>
    <property type="evidence" value="ECO:0007669"/>
    <property type="project" value="InterPro"/>
</dbReference>
<dbReference type="InterPro" id="IPR009396">
    <property type="entry name" value="Pigment_DH"/>
</dbReference>
<dbReference type="Pfam" id="PF06324">
    <property type="entry name" value="Pigment_DH"/>
    <property type="match status" value="1"/>
</dbReference>
<protein>
    <recommendedName>
        <fullName>Pigment-dispersing hormone type 2</fullName>
    </recommendedName>
    <component>
        <recommendedName>
            <fullName>PDH precursor-related peptide</fullName>
            <shortName>PPRD</shortName>
        </recommendedName>
    </component>
    <component>
        <recommendedName>
            <fullName>Pigment-dispersing hormone</fullName>
            <shortName>PDH</shortName>
        </recommendedName>
    </component>
</protein>
<organism>
    <name type="scientific">Penaeus vannamei</name>
    <name type="common">Whiteleg shrimp</name>
    <name type="synonym">Litopenaeus vannamei</name>
    <dbReference type="NCBI Taxonomy" id="6689"/>
    <lineage>
        <taxon>Eukaryota</taxon>
        <taxon>Metazoa</taxon>
        <taxon>Ecdysozoa</taxon>
        <taxon>Arthropoda</taxon>
        <taxon>Crustacea</taxon>
        <taxon>Multicrustacea</taxon>
        <taxon>Malacostraca</taxon>
        <taxon>Eumalacostraca</taxon>
        <taxon>Eucarida</taxon>
        <taxon>Decapoda</taxon>
        <taxon>Dendrobranchiata</taxon>
        <taxon>Penaeoidea</taxon>
        <taxon>Penaeidae</taxon>
        <taxon>Penaeus</taxon>
    </lineage>
</organism>
<keyword id="KW-0027">Amidation</keyword>
<keyword id="KW-0165">Cleavage on pair of basic residues</keyword>
<keyword id="KW-0372">Hormone</keyword>
<keyword id="KW-0529">Neurotransmitter</keyword>
<keyword id="KW-0964">Secreted</keyword>
<keyword id="KW-0732">Signal</keyword>
<accession>P91964</accession>
<comment type="function">
    <text evidence="1">The pigment-dispersing hormone causes the migration of the distal retinal pigment into the proximal end of the pigment chromatophore cells and thus decreases the amount of light entering the retinulas. May also function as a neurotransmitter and/or neuromodulator (By similarity).</text>
</comment>
<comment type="subcellular location">
    <subcellularLocation>
        <location evidence="1">Secreted</location>
    </subcellularLocation>
</comment>
<comment type="tissue specificity">
    <text>Eyestalk.</text>
</comment>
<comment type="miscellaneous">
    <text>The function of PDH precursor-related peptide is unknown. The sequence is not well-conserved among different species and that might be an indication that it is inactive.</text>
</comment>
<comment type="similarity">
    <text evidence="3">Belongs to the arthropod PDH family.</text>
</comment>
<name>PDH2_PENVA</name>
<reference key="1">
    <citation type="journal article" date="1996" name="Biochem. Biophys. Res. Commun.">
        <title>Molecular cloning of the precursors of pigment-dispersing hormone in Crustaceans.</title>
        <authorList>
            <person name="Desmoucelles-Carette C."/>
            <person name="Sellos D."/>
            <person name="Van Wormhoudt A."/>
        </authorList>
    </citation>
    <scope>NUCLEOTIDE SEQUENCE [MRNA]</scope>
    <source>
        <tissue>Eyestalk</tissue>
    </source>
</reference>
<sequence>MARCFVVLAFLALAAMSLQVATAQDDLKYFEREVVAELAAQILRVAQGPSAFVAGPHKRNSELINSLLGIPKVMNDAGRR</sequence>
<evidence type="ECO:0000250" key="1"/>
<evidence type="ECO:0000255" key="2"/>
<evidence type="ECO:0000305" key="3"/>